<accession>Q5P6C0</accession>
<sequence length="85" mass="9727">MAKEELIEMSGMVVEVLPDSRFRVTLDNGHNLVAYSAGKMRKHHIRILCGDKVSLELSPYDLSKGRITFRHLEGRGPLGPQRRRR</sequence>
<keyword id="KW-0963">Cytoplasm</keyword>
<keyword id="KW-0396">Initiation factor</keyword>
<keyword id="KW-0648">Protein biosynthesis</keyword>
<keyword id="KW-1185">Reference proteome</keyword>
<keyword id="KW-0694">RNA-binding</keyword>
<keyword id="KW-0699">rRNA-binding</keyword>
<proteinExistence type="inferred from homology"/>
<organism>
    <name type="scientific">Aromatoleum aromaticum (strain DSM 19018 / LMG 30748 / EbN1)</name>
    <name type="common">Azoarcus sp. (strain EbN1)</name>
    <dbReference type="NCBI Taxonomy" id="76114"/>
    <lineage>
        <taxon>Bacteria</taxon>
        <taxon>Pseudomonadati</taxon>
        <taxon>Pseudomonadota</taxon>
        <taxon>Betaproteobacteria</taxon>
        <taxon>Rhodocyclales</taxon>
        <taxon>Rhodocyclaceae</taxon>
        <taxon>Aromatoleum</taxon>
    </lineage>
</organism>
<evidence type="ECO:0000255" key="1">
    <source>
        <dbReference type="HAMAP-Rule" id="MF_00075"/>
    </source>
</evidence>
<gene>
    <name evidence="1" type="primary">infA1</name>
    <name type="ordered locus">AZOSEA10160</name>
    <name type="ORF">ebA1871</name>
</gene>
<dbReference type="EMBL" id="CR555306">
    <property type="protein sequence ID" value="CAI07141.1"/>
    <property type="molecule type" value="Genomic_DNA"/>
</dbReference>
<dbReference type="RefSeq" id="WP_011236866.1">
    <property type="nucleotide sequence ID" value="NC_006513.1"/>
</dbReference>
<dbReference type="SMR" id="Q5P6C0"/>
<dbReference type="STRING" id="76114.ebA1871"/>
<dbReference type="KEGG" id="eba:ebA1871"/>
<dbReference type="eggNOG" id="COG0361">
    <property type="taxonomic scope" value="Bacteria"/>
</dbReference>
<dbReference type="HOGENOM" id="CLU_151267_4_1_4"/>
<dbReference type="OrthoDB" id="9803250at2"/>
<dbReference type="Proteomes" id="UP000006552">
    <property type="component" value="Chromosome"/>
</dbReference>
<dbReference type="GO" id="GO:0005829">
    <property type="term" value="C:cytosol"/>
    <property type="evidence" value="ECO:0007669"/>
    <property type="project" value="TreeGrafter"/>
</dbReference>
<dbReference type="GO" id="GO:0043022">
    <property type="term" value="F:ribosome binding"/>
    <property type="evidence" value="ECO:0007669"/>
    <property type="project" value="UniProtKB-UniRule"/>
</dbReference>
<dbReference type="GO" id="GO:0019843">
    <property type="term" value="F:rRNA binding"/>
    <property type="evidence" value="ECO:0007669"/>
    <property type="project" value="UniProtKB-UniRule"/>
</dbReference>
<dbReference type="GO" id="GO:0003743">
    <property type="term" value="F:translation initiation factor activity"/>
    <property type="evidence" value="ECO:0007669"/>
    <property type="project" value="UniProtKB-UniRule"/>
</dbReference>
<dbReference type="CDD" id="cd04451">
    <property type="entry name" value="S1_IF1"/>
    <property type="match status" value="1"/>
</dbReference>
<dbReference type="FunFam" id="2.40.50.140:FF:000002">
    <property type="entry name" value="Translation initiation factor IF-1"/>
    <property type="match status" value="1"/>
</dbReference>
<dbReference type="Gene3D" id="2.40.50.140">
    <property type="entry name" value="Nucleic acid-binding proteins"/>
    <property type="match status" value="1"/>
</dbReference>
<dbReference type="HAMAP" id="MF_00075">
    <property type="entry name" value="IF_1"/>
    <property type="match status" value="1"/>
</dbReference>
<dbReference type="InterPro" id="IPR012340">
    <property type="entry name" value="NA-bd_OB-fold"/>
</dbReference>
<dbReference type="InterPro" id="IPR006196">
    <property type="entry name" value="RNA-binding_domain_S1_IF1"/>
</dbReference>
<dbReference type="InterPro" id="IPR004368">
    <property type="entry name" value="TIF_IF1"/>
</dbReference>
<dbReference type="NCBIfam" id="TIGR00008">
    <property type="entry name" value="infA"/>
    <property type="match status" value="1"/>
</dbReference>
<dbReference type="PANTHER" id="PTHR33370">
    <property type="entry name" value="TRANSLATION INITIATION FACTOR IF-1, CHLOROPLASTIC"/>
    <property type="match status" value="1"/>
</dbReference>
<dbReference type="PANTHER" id="PTHR33370:SF1">
    <property type="entry name" value="TRANSLATION INITIATION FACTOR IF-1, CHLOROPLASTIC"/>
    <property type="match status" value="1"/>
</dbReference>
<dbReference type="Pfam" id="PF01176">
    <property type="entry name" value="eIF-1a"/>
    <property type="match status" value="1"/>
</dbReference>
<dbReference type="SUPFAM" id="SSF50249">
    <property type="entry name" value="Nucleic acid-binding proteins"/>
    <property type="match status" value="1"/>
</dbReference>
<dbReference type="PROSITE" id="PS50832">
    <property type="entry name" value="S1_IF1_TYPE"/>
    <property type="match status" value="1"/>
</dbReference>
<name>IF11_AROAE</name>
<feature type="chain" id="PRO_0000263763" description="Translation initiation factor IF-1 1">
    <location>
        <begin position="1"/>
        <end position="85"/>
    </location>
</feature>
<feature type="domain" description="S1-like" evidence="1">
    <location>
        <begin position="1"/>
        <end position="72"/>
    </location>
</feature>
<comment type="function">
    <text evidence="1">One of the essential components for the initiation of protein synthesis. Stabilizes the binding of IF-2 and IF-3 on the 30S subunit to which N-formylmethionyl-tRNA(fMet) subsequently binds. Helps modulate mRNA selection, yielding the 30S pre-initiation complex (PIC). Upon addition of the 50S ribosomal subunit IF-1, IF-2 and IF-3 are released leaving the mature 70S translation initiation complex.</text>
</comment>
<comment type="subunit">
    <text evidence="1">Component of the 30S ribosomal translation pre-initiation complex which assembles on the 30S ribosome in the order IF-2 and IF-3, IF-1 and N-formylmethionyl-tRNA(fMet); mRNA recruitment can occur at any time during PIC assembly.</text>
</comment>
<comment type="subcellular location">
    <subcellularLocation>
        <location evidence="1">Cytoplasm</location>
    </subcellularLocation>
</comment>
<comment type="similarity">
    <text evidence="1">Belongs to the IF-1 family.</text>
</comment>
<protein>
    <recommendedName>
        <fullName evidence="1">Translation initiation factor IF-1 1</fullName>
    </recommendedName>
</protein>
<reference key="1">
    <citation type="journal article" date="2005" name="Arch. Microbiol.">
        <title>The genome sequence of an anaerobic aromatic-degrading denitrifying bacterium, strain EbN1.</title>
        <authorList>
            <person name="Rabus R."/>
            <person name="Kube M."/>
            <person name="Heider J."/>
            <person name="Beck A."/>
            <person name="Heitmann K."/>
            <person name="Widdel F."/>
            <person name="Reinhardt R."/>
        </authorList>
    </citation>
    <scope>NUCLEOTIDE SEQUENCE [LARGE SCALE GENOMIC DNA]</scope>
    <source>
        <strain>DSM 19018 / LMG 30748 / EbN1</strain>
    </source>
</reference>